<evidence type="ECO:0000250" key="1"/>
<evidence type="ECO:0000255" key="2">
    <source>
        <dbReference type="PROSITE-ProRule" id="PRU00125"/>
    </source>
</evidence>
<evidence type="ECO:0000255" key="3">
    <source>
        <dbReference type="PROSITE-ProRule" id="PRU00636"/>
    </source>
</evidence>
<evidence type="ECO:0000256" key="4">
    <source>
        <dbReference type="SAM" id="MobiDB-lite"/>
    </source>
</evidence>
<evidence type="ECO:0000305" key="5"/>
<accession>Q2IBH0</accession>
<reference key="1">
    <citation type="submission" date="2005-11" db="EMBL/GenBank/DDBJ databases">
        <title>NISC comparative sequencing initiative.</title>
        <authorList>
            <person name="Antonellis A."/>
            <person name="Ayele K."/>
            <person name="Benjamin B."/>
            <person name="Blakesley R.W."/>
            <person name="Boakye A."/>
            <person name="Bouffard G.G."/>
            <person name="Brinkley C."/>
            <person name="Brooks S."/>
            <person name="Chu G."/>
            <person name="Coleman H."/>
            <person name="Engle J."/>
            <person name="Gestole M."/>
            <person name="Greene A."/>
            <person name="Guan X."/>
            <person name="Gupta J."/>
            <person name="Haghighi P."/>
            <person name="Han J."/>
            <person name="Hansen N."/>
            <person name="Ho S.-L."/>
            <person name="Hu P."/>
            <person name="Hunter G."/>
            <person name="Hurle B."/>
            <person name="Idol J.R."/>
            <person name="Kwong P."/>
            <person name="Laric P."/>
            <person name="Larson S."/>
            <person name="Lee-Lin S.-Q."/>
            <person name="Legaspi R."/>
            <person name="Madden M."/>
            <person name="Maduro Q.L."/>
            <person name="Maduro V.B."/>
            <person name="Margulies E.H."/>
            <person name="Masiello C."/>
            <person name="Maskeri B."/>
            <person name="McDowell J."/>
            <person name="Mojidi H.A."/>
            <person name="Mullikin J.C."/>
            <person name="Oestreicher J.S."/>
            <person name="Park M."/>
            <person name="Portnoy M.E."/>
            <person name="Prasad A."/>
            <person name="Puri O."/>
            <person name="Reddix-Dugue N."/>
            <person name="Schandler K."/>
            <person name="Schueler M.G."/>
            <person name="Sison C."/>
            <person name="Stantripop S."/>
            <person name="Stephen E."/>
            <person name="Taye A."/>
            <person name="Thomas J.W."/>
            <person name="Thomas P.J."/>
            <person name="Tsipouri V."/>
            <person name="Ung L."/>
            <person name="Vogt J.L."/>
            <person name="Wetherby K.D."/>
            <person name="Young A."/>
            <person name="Green E.D."/>
        </authorList>
    </citation>
    <scope>NUCLEOTIDE SEQUENCE [LARGE SCALE GENOMIC DNA]</scope>
</reference>
<protein>
    <recommendedName>
        <fullName>Testin</fullName>
    </recommendedName>
</protein>
<keyword id="KW-0965">Cell junction</keyword>
<keyword id="KW-0963">Cytoplasm</keyword>
<keyword id="KW-0440">LIM domain</keyword>
<keyword id="KW-0479">Metal-binding</keyword>
<keyword id="KW-0677">Repeat</keyword>
<keyword id="KW-0862">Zinc</keyword>
<name>TES_EULMM</name>
<organism>
    <name type="scientific">Eulemur macaco macaco</name>
    <name type="common">Black lemur</name>
    <dbReference type="NCBI Taxonomy" id="30603"/>
    <lineage>
        <taxon>Eukaryota</taxon>
        <taxon>Metazoa</taxon>
        <taxon>Chordata</taxon>
        <taxon>Craniata</taxon>
        <taxon>Vertebrata</taxon>
        <taxon>Euteleostomi</taxon>
        <taxon>Mammalia</taxon>
        <taxon>Eutheria</taxon>
        <taxon>Euarchontoglires</taxon>
        <taxon>Primates</taxon>
        <taxon>Strepsirrhini</taxon>
        <taxon>Lemuriformes</taxon>
        <taxon>Lemuridae</taxon>
        <taxon>Eulemur</taxon>
    </lineage>
</organism>
<feature type="chain" id="PRO_0000251901" description="Testin">
    <location>
        <begin position="1"/>
        <end position="421"/>
    </location>
</feature>
<feature type="domain" description="PET" evidence="3">
    <location>
        <begin position="92"/>
        <end position="199"/>
    </location>
</feature>
<feature type="domain" description="LIM zinc-binding 1" evidence="2">
    <location>
        <begin position="234"/>
        <end position="297"/>
    </location>
</feature>
<feature type="domain" description="LIM zinc-binding 2" evidence="2">
    <location>
        <begin position="299"/>
        <end position="359"/>
    </location>
</feature>
<feature type="domain" description="LIM zinc-binding 3" evidence="2">
    <location>
        <begin position="362"/>
        <end position="421"/>
    </location>
</feature>
<feature type="region of interest" description="Disordered" evidence="4">
    <location>
        <begin position="134"/>
        <end position="164"/>
    </location>
</feature>
<feature type="compositionally biased region" description="Basic and acidic residues" evidence="4">
    <location>
        <begin position="155"/>
        <end position="164"/>
    </location>
</feature>
<comment type="function">
    <text evidence="1">Scaffold protein that may play a role in cell adhesion, cell spreading and in the reorganization of the actin cytoskeleton. Plays a role in the regulation of cell proliferation. May act as a tumor suppressor (By similarity).</text>
</comment>
<comment type="subunit">
    <text evidence="1">Interacts via LIM domain 1 with ZYX. Interacts (via LIM domain 3) with ENAH and VASP. Interacts with ALKBH4, talin, actin, alpha-actinin, GRIP1 and PXN (By similarity). Interacts (via LIM domain 2) with ACTL7A (via N-terminus). Heterodimer with ACTL7A; the heterodimer interacts with ENAH to form a heterotrimer (By similarity).</text>
</comment>
<comment type="subcellular location">
    <subcellularLocation>
        <location evidence="1">Cytoplasm</location>
    </subcellularLocation>
    <subcellularLocation>
        <location evidence="1">Cell junction</location>
        <location evidence="1">Focal adhesion</location>
    </subcellularLocation>
    <text evidence="1">Detected along actin stress fibers.</text>
</comment>
<comment type="domain">
    <text evidence="1">The N-terminal and the C-terminal halves of the protein can associate with each other, thereby hindering interactions with ZYX.</text>
</comment>
<comment type="similarity">
    <text evidence="5">Belongs to the prickle / espinas / testin family.</text>
</comment>
<dbReference type="EMBL" id="DP000024">
    <property type="protein sequence ID" value="ABC87432.1"/>
    <property type="molecule type" value="Genomic_DNA"/>
</dbReference>
<dbReference type="SMR" id="Q2IBH0"/>
<dbReference type="GO" id="GO:0005737">
    <property type="term" value="C:cytoplasm"/>
    <property type="evidence" value="ECO:0000250"/>
    <property type="project" value="UniProtKB"/>
</dbReference>
<dbReference type="GO" id="GO:0005925">
    <property type="term" value="C:focal adhesion"/>
    <property type="evidence" value="ECO:0007669"/>
    <property type="project" value="UniProtKB-SubCell"/>
</dbReference>
<dbReference type="GO" id="GO:0008270">
    <property type="term" value="F:zinc ion binding"/>
    <property type="evidence" value="ECO:0000250"/>
    <property type="project" value="UniProtKB"/>
</dbReference>
<dbReference type="GO" id="GO:0008285">
    <property type="term" value="P:negative regulation of cell population proliferation"/>
    <property type="evidence" value="ECO:0000250"/>
    <property type="project" value="UniProtKB"/>
</dbReference>
<dbReference type="CDD" id="cd09413">
    <property type="entry name" value="LIM1_Testin"/>
    <property type="match status" value="1"/>
</dbReference>
<dbReference type="CDD" id="cd09416">
    <property type="entry name" value="LIM2_Testin"/>
    <property type="match status" value="1"/>
</dbReference>
<dbReference type="CDD" id="cd09419">
    <property type="entry name" value="LIM3_Testin"/>
    <property type="match status" value="1"/>
</dbReference>
<dbReference type="CDD" id="cd09829">
    <property type="entry name" value="PET_testin"/>
    <property type="match status" value="1"/>
</dbReference>
<dbReference type="FunFam" id="2.10.110.10:FF:000061">
    <property type="entry name" value="Testin"/>
    <property type="match status" value="1"/>
</dbReference>
<dbReference type="FunFam" id="2.10.110.10:FF:000065">
    <property type="entry name" value="Testin"/>
    <property type="match status" value="1"/>
</dbReference>
<dbReference type="FunFam" id="2.10.110.10:FF:000005">
    <property type="entry name" value="Testin isoform 1"/>
    <property type="match status" value="1"/>
</dbReference>
<dbReference type="Gene3D" id="2.10.110.10">
    <property type="entry name" value="Cysteine Rich Protein"/>
    <property type="match status" value="3"/>
</dbReference>
<dbReference type="InterPro" id="IPR034958">
    <property type="entry name" value="LIM1_Testin"/>
</dbReference>
<dbReference type="InterPro" id="IPR034959">
    <property type="entry name" value="LIM2_Testin"/>
</dbReference>
<dbReference type="InterPro" id="IPR034960">
    <property type="entry name" value="LIM3_Testin"/>
</dbReference>
<dbReference type="InterPro" id="IPR010442">
    <property type="entry name" value="PET_domain"/>
</dbReference>
<dbReference type="InterPro" id="IPR033724">
    <property type="entry name" value="PET_testin"/>
</dbReference>
<dbReference type="InterPro" id="IPR047120">
    <property type="entry name" value="Pk/Esn/Tes"/>
</dbReference>
<dbReference type="InterPro" id="IPR001781">
    <property type="entry name" value="Znf_LIM"/>
</dbReference>
<dbReference type="PANTHER" id="PTHR24211">
    <property type="entry name" value="LIM DOMAIN-CONTAINING PROTEIN"/>
    <property type="match status" value="1"/>
</dbReference>
<dbReference type="PANTHER" id="PTHR24211:SF1">
    <property type="entry name" value="TESTIN"/>
    <property type="match status" value="1"/>
</dbReference>
<dbReference type="Pfam" id="PF00412">
    <property type="entry name" value="LIM"/>
    <property type="match status" value="3"/>
</dbReference>
<dbReference type="Pfam" id="PF06297">
    <property type="entry name" value="PET"/>
    <property type="match status" value="1"/>
</dbReference>
<dbReference type="SMART" id="SM00132">
    <property type="entry name" value="LIM"/>
    <property type="match status" value="3"/>
</dbReference>
<dbReference type="SUPFAM" id="SSF57716">
    <property type="entry name" value="Glucocorticoid receptor-like (DNA-binding domain)"/>
    <property type="match status" value="2"/>
</dbReference>
<dbReference type="PROSITE" id="PS00478">
    <property type="entry name" value="LIM_DOMAIN_1"/>
    <property type="match status" value="2"/>
</dbReference>
<dbReference type="PROSITE" id="PS50023">
    <property type="entry name" value="LIM_DOMAIN_2"/>
    <property type="match status" value="3"/>
</dbReference>
<dbReference type="PROSITE" id="PS51303">
    <property type="entry name" value="PET"/>
    <property type="match status" value="1"/>
</dbReference>
<gene>
    <name type="primary">TES</name>
</gene>
<proteinExistence type="inferred from homology"/>
<sequence length="421" mass="48062">MDLETKVKKMGLGHEQGFGAPCLKCKEKCEGFELHFWRKICRNCKCGQEEHDILLSNEEDRKVGKLFEDTKYTTLIAKLKSDGIPMYKRNVMILTNPVAARKNVSINTVTYEWAPPVQNQALARQYMQMLPKDKQPVAGSEGAQYRKKQLAKQLPAHDQDPSKCHELSPKEVKEMEQFVKKYKNEALGVGDVKLPCELDARGPNQMYIPGGDRSTSAAVGAMEDKSAEHKNTQYSCYCCKMSMKEGDPAIYAERAGYDKLWHPACFVCSICYELLVDMIYFWKDEKLYCGRHYCDSEKPRCAGCDELIFSNEYTQAENQNWHLKHFCCFDCDNILAGEIYVMVNDKPVCKPCYVKNHAVVCQGCHNAIDPEVQRVTYNNFSWHASTECFLCSCCSKCLIGQKFMPVEGMVFCSVECKKMMS</sequence>